<sequence>MTIQKGIITLTILIFISGLLTAFLLLDDSHLSFFRAQQNQRKHYVERTLQLQKMTATKKQTACLDLPLNNNESVKQISIALEGSTDAIQYFLWCERMSLFKKSPKKGDNQGALKDFVTDEKLAYFRPHFSSPPRILNANKMPKLYWFSDSQAEVEINGTVSAVLIAEGDLKLTGKGRISGAVITSGNLTLDGVTLAYGKKTVVALVQQYSQWQLAEKSWSDFNVQDE</sequence>
<accession>P44081</accession>
<proteinExistence type="predicted"/>
<organism>
    <name type="scientific">Haemophilus influenzae (strain ATCC 51907 / DSM 11121 / KW20 / Rd)</name>
    <dbReference type="NCBI Taxonomy" id="71421"/>
    <lineage>
        <taxon>Bacteria</taxon>
        <taxon>Pseudomonadati</taxon>
        <taxon>Pseudomonadota</taxon>
        <taxon>Gammaproteobacteria</taxon>
        <taxon>Pasteurellales</taxon>
        <taxon>Pasteurellaceae</taxon>
        <taxon>Haemophilus</taxon>
    </lineage>
</organism>
<protein>
    <recommendedName>
        <fullName>Uncharacterized protein HI_0940</fullName>
    </recommendedName>
</protein>
<keyword id="KW-0472">Membrane</keyword>
<keyword id="KW-1185">Reference proteome</keyword>
<keyword id="KW-0812">Transmembrane</keyword>
<keyword id="KW-1133">Transmembrane helix</keyword>
<dbReference type="EMBL" id="L42023">
    <property type="protein sequence ID" value="AAC22604.1"/>
    <property type="molecule type" value="Genomic_DNA"/>
</dbReference>
<dbReference type="PIR" id="I64016">
    <property type="entry name" value="I64016"/>
</dbReference>
<dbReference type="RefSeq" id="NP_439100.1">
    <property type="nucleotide sequence ID" value="NC_000907.1"/>
</dbReference>
<dbReference type="SMR" id="P44081"/>
<dbReference type="STRING" id="71421.HI_0940"/>
<dbReference type="EnsemblBacteria" id="AAC22604">
    <property type="protein sequence ID" value="AAC22604"/>
    <property type="gene ID" value="HI_0940"/>
</dbReference>
<dbReference type="KEGG" id="hin:HI_0940"/>
<dbReference type="PATRIC" id="fig|71421.8.peg.981"/>
<dbReference type="eggNOG" id="ENOG5030RID">
    <property type="taxonomic scope" value="Bacteria"/>
</dbReference>
<dbReference type="HOGENOM" id="CLU_1222643_0_0_6"/>
<dbReference type="OrthoDB" id="5686653at2"/>
<dbReference type="BioCyc" id="HINF71421:G1GJ1-980-MONOMER"/>
<dbReference type="Proteomes" id="UP000000579">
    <property type="component" value="Chromosome"/>
</dbReference>
<dbReference type="GO" id="GO:0016020">
    <property type="term" value="C:membrane"/>
    <property type="evidence" value="ECO:0007669"/>
    <property type="project" value="UniProtKB-SubCell"/>
</dbReference>
<dbReference type="InterPro" id="IPR022543">
    <property type="entry name" value="DUF2572"/>
</dbReference>
<dbReference type="Pfam" id="PF10833">
    <property type="entry name" value="DUF2572"/>
    <property type="match status" value="1"/>
</dbReference>
<comment type="subcellular location">
    <subcellularLocation>
        <location evidence="2">Membrane</location>
        <topology evidence="2">Single-pass membrane protein</topology>
    </subcellularLocation>
</comment>
<gene>
    <name type="ordered locus">HI_0940</name>
</gene>
<name>Y940_HAEIN</name>
<reference key="1">
    <citation type="journal article" date="1995" name="Science">
        <title>Whole-genome random sequencing and assembly of Haemophilus influenzae Rd.</title>
        <authorList>
            <person name="Fleischmann R.D."/>
            <person name="Adams M.D."/>
            <person name="White O."/>
            <person name="Clayton R.A."/>
            <person name="Kirkness E.F."/>
            <person name="Kerlavage A.R."/>
            <person name="Bult C.J."/>
            <person name="Tomb J.-F."/>
            <person name="Dougherty B.A."/>
            <person name="Merrick J.M."/>
            <person name="McKenney K."/>
            <person name="Sutton G.G."/>
            <person name="FitzHugh W."/>
            <person name="Fields C.A."/>
            <person name="Gocayne J.D."/>
            <person name="Scott J.D."/>
            <person name="Shirley R."/>
            <person name="Liu L.-I."/>
            <person name="Glodek A."/>
            <person name="Kelley J.M."/>
            <person name="Weidman J.F."/>
            <person name="Phillips C.A."/>
            <person name="Spriggs T."/>
            <person name="Hedblom E."/>
            <person name="Cotton M.D."/>
            <person name="Utterback T.R."/>
            <person name="Hanna M.C."/>
            <person name="Nguyen D.T."/>
            <person name="Saudek D.M."/>
            <person name="Brandon R.C."/>
            <person name="Fine L.D."/>
            <person name="Fritchman J.L."/>
            <person name="Fuhrmann J.L."/>
            <person name="Geoghagen N.S.M."/>
            <person name="Gnehm C.L."/>
            <person name="McDonald L.A."/>
            <person name="Small K.V."/>
            <person name="Fraser C.M."/>
            <person name="Smith H.O."/>
            <person name="Venter J.C."/>
        </authorList>
    </citation>
    <scope>NUCLEOTIDE SEQUENCE [LARGE SCALE GENOMIC DNA]</scope>
    <source>
        <strain>ATCC 51907 / DSM 11121 / KW20 / Rd</strain>
    </source>
</reference>
<feature type="chain" id="PRO_0000077980" description="Uncharacterized protein HI_0940">
    <location>
        <begin position="1"/>
        <end position="227"/>
    </location>
</feature>
<feature type="transmembrane region" description="Helical" evidence="1">
    <location>
        <begin position="7"/>
        <end position="26"/>
    </location>
</feature>
<evidence type="ECO:0000255" key="1"/>
<evidence type="ECO:0000305" key="2"/>